<protein>
    <recommendedName>
        <fullName evidence="1">Phosphate acyltransferase</fullName>
        <ecNumber evidence="1">2.3.1.274</ecNumber>
    </recommendedName>
    <alternativeName>
        <fullName evidence="1">Acyl-ACP phosphotransacylase</fullName>
    </alternativeName>
    <alternativeName>
        <fullName evidence="1">Acyl-[acyl-carrier-protein]--phosphate acyltransferase</fullName>
    </alternativeName>
    <alternativeName>
        <fullName evidence="1">Phosphate-acyl-ACP acyltransferase</fullName>
    </alternativeName>
</protein>
<reference key="1">
    <citation type="submission" date="2008-08" db="EMBL/GenBank/DDBJ databases">
        <title>Complete sequence of Anaeromyxobacter sp. K.</title>
        <authorList>
            <consortium name="US DOE Joint Genome Institute"/>
            <person name="Lucas S."/>
            <person name="Copeland A."/>
            <person name="Lapidus A."/>
            <person name="Glavina del Rio T."/>
            <person name="Dalin E."/>
            <person name="Tice H."/>
            <person name="Bruce D."/>
            <person name="Goodwin L."/>
            <person name="Pitluck S."/>
            <person name="Saunders E."/>
            <person name="Brettin T."/>
            <person name="Detter J.C."/>
            <person name="Han C."/>
            <person name="Larimer F."/>
            <person name="Land M."/>
            <person name="Hauser L."/>
            <person name="Kyrpides N."/>
            <person name="Ovchinnikiva G."/>
            <person name="Beliaev A."/>
        </authorList>
    </citation>
    <scope>NUCLEOTIDE SEQUENCE [LARGE SCALE GENOMIC DNA]</scope>
    <source>
        <strain>K</strain>
    </source>
</reference>
<accession>B4UIN4</accession>
<keyword id="KW-0963">Cytoplasm</keyword>
<keyword id="KW-0444">Lipid biosynthesis</keyword>
<keyword id="KW-0443">Lipid metabolism</keyword>
<keyword id="KW-0594">Phospholipid biosynthesis</keyword>
<keyword id="KW-1208">Phospholipid metabolism</keyword>
<keyword id="KW-0808">Transferase</keyword>
<feature type="chain" id="PRO_1000089877" description="Phosphate acyltransferase">
    <location>
        <begin position="1"/>
        <end position="361"/>
    </location>
</feature>
<feature type="region of interest" description="Disordered" evidence="2">
    <location>
        <begin position="342"/>
        <end position="361"/>
    </location>
</feature>
<organism>
    <name type="scientific">Anaeromyxobacter sp. (strain K)</name>
    <dbReference type="NCBI Taxonomy" id="447217"/>
    <lineage>
        <taxon>Bacteria</taxon>
        <taxon>Pseudomonadati</taxon>
        <taxon>Myxococcota</taxon>
        <taxon>Myxococcia</taxon>
        <taxon>Myxococcales</taxon>
        <taxon>Cystobacterineae</taxon>
        <taxon>Anaeromyxobacteraceae</taxon>
        <taxon>Anaeromyxobacter</taxon>
    </lineage>
</organism>
<evidence type="ECO:0000255" key="1">
    <source>
        <dbReference type="HAMAP-Rule" id="MF_00019"/>
    </source>
</evidence>
<evidence type="ECO:0000256" key="2">
    <source>
        <dbReference type="SAM" id="MobiDB-lite"/>
    </source>
</evidence>
<name>PLSX_ANASK</name>
<dbReference type="EC" id="2.3.1.274" evidence="1"/>
<dbReference type="EMBL" id="CP001131">
    <property type="protein sequence ID" value="ACG74067.1"/>
    <property type="molecule type" value="Genomic_DNA"/>
</dbReference>
<dbReference type="RefSeq" id="WP_012526844.1">
    <property type="nucleotide sequence ID" value="NC_011145.1"/>
</dbReference>
<dbReference type="SMR" id="B4UIN4"/>
<dbReference type="KEGG" id="ank:AnaeK_2843"/>
<dbReference type="HOGENOM" id="CLU_039379_1_1_7"/>
<dbReference type="OrthoDB" id="9806408at2"/>
<dbReference type="UniPathway" id="UPA00085"/>
<dbReference type="Proteomes" id="UP000001871">
    <property type="component" value="Chromosome"/>
</dbReference>
<dbReference type="GO" id="GO:0005737">
    <property type="term" value="C:cytoplasm"/>
    <property type="evidence" value="ECO:0007669"/>
    <property type="project" value="UniProtKB-SubCell"/>
</dbReference>
<dbReference type="GO" id="GO:0043811">
    <property type="term" value="F:phosphate:acyl-[acyl carrier protein] acyltransferase activity"/>
    <property type="evidence" value="ECO:0007669"/>
    <property type="project" value="UniProtKB-UniRule"/>
</dbReference>
<dbReference type="GO" id="GO:0006633">
    <property type="term" value="P:fatty acid biosynthetic process"/>
    <property type="evidence" value="ECO:0007669"/>
    <property type="project" value="UniProtKB-UniRule"/>
</dbReference>
<dbReference type="GO" id="GO:0008654">
    <property type="term" value="P:phospholipid biosynthetic process"/>
    <property type="evidence" value="ECO:0007669"/>
    <property type="project" value="UniProtKB-KW"/>
</dbReference>
<dbReference type="Gene3D" id="3.40.718.10">
    <property type="entry name" value="Isopropylmalate Dehydrogenase"/>
    <property type="match status" value="1"/>
</dbReference>
<dbReference type="HAMAP" id="MF_00019">
    <property type="entry name" value="PlsX"/>
    <property type="match status" value="1"/>
</dbReference>
<dbReference type="InterPro" id="IPR003664">
    <property type="entry name" value="FA_synthesis"/>
</dbReference>
<dbReference type="InterPro" id="IPR012281">
    <property type="entry name" value="Phospholipid_synth_PlsX-like"/>
</dbReference>
<dbReference type="NCBIfam" id="TIGR00182">
    <property type="entry name" value="plsX"/>
    <property type="match status" value="1"/>
</dbReference>
<dbReference type="PANTHER" id="PTHR30100">
    <property type="entry name" value="FATTY ACID/PHOSPHOLIPID SYNTHESIS PROTEIN PLSX"/>
    <property type="match status" value="1"/>
</dbReference>
<dbReference type="PANTHER" id="PTHR30100:SF1">
    <property type="entry name" value="PHOSPHATE ACYLTRANSFERASE"/>
    <property type="match status" value="1"/>
</dbReference>
<dbReference type="Pfam" id="PF02504">
    <property type="entry name" value="FA_synthesis"/>
    <property type="match status" value="1"/>
</dbReference>
<dbReference type="PIRSF" id="PIRSF002465">
    <property type="entry name" value="Phsphlp_syn_PlsX"/>
    <property type="match status" value="1"/>
</dbReference>
<dbReference type="SUPFAM" id="SSF53659">
    <property type="entry name" value="Isocitrate/Isopropylmalate dehydrogenase-like"/>
    <property type="match status" value="1"/>
</dbReference>
<comment type="function">
    <text evidence="1">Catalyzes the reversible formation of acyl-phosphate (acyl-PO(4)) from acyl-[acyl-carrier-protein] (acyl-ACP). This enzyme utilizes acyl-ACP as fatty acyl donor, but not acyl-CoA.</text>
</comment>
<comment type="catalytic activity">
    <reaction evidence="1">
        <text>a fatty acyl-[ACP] + phosphate = an acyl phosphate + holo-[ACP]</text>
        <dbReference type="Rhea" id="RHEA:42292"/>
        <dbReference type="Rhea" id="RHEA-COMP:9685"/>
        <dbReference type="Rhea" id="RHEA-COMP:14125"/>
        <dbReference type="ChEBI" id="CHEBI:43474"/>
        <dbReference type="ChEBI" id="CHEBI:59918"/>
        <dbReference type="ChEBI" id="CHEBI:64479"/>
        <dbReference type="ChEBI" id="CHEBI:138651"/>
        <dbReference type="EC" id="2.3.1.274"/>
    </reaction>
</comment>
<comment type="pathway">
    <text evidence="1">Lipid metabolism; phospholipid metabolism.</text>
</comment>
<comment type="subunit">
    <text evidence="1">Homodimer. Probably interacts with PlsY.</text>
</comment>
<comment type="subcellular location">
    <subcellularLocation>
        <location evidence="1">Cytoplasm</location>
    </subcellularLocation>
    <text evidence="1">Associated with the membrane possibly through PlsY.</text>
</comment>
<comment type="similarity">
    <text evidence="1">Belongs to the PlsX family.</text>
</comment>
<sequence>MVGKIAPIAVDAMGGDHAPGAIVQGAVNAARKGLPVVLVGPEARVREELARHRAASSLPLEVHPATEVVEMHDHPGQAMRRKKDNSIRVCFELVASGRAAGMVSAGNSGAVMAGAILVLGRPEGVERPAIVSVLPALKGAPLMLDMGAVVDCRPIHLVQFALMGEVYSRRVHGVARPRVAILSNGEEDTKGTDLTRAAAAALRRAPIDFVGYCEGRDLLTGEVDVIVTDGFTGNVALKTMEGTAKVVGEYLKRALRSTTVSKIGGLLSKAALEGMKKRIDWREVGGAPLVGVNGVGFISHGRSDALAVENAIRRAGDAARTHFIDEIARAVAPSHALLEVPADGAAAEQGPTPRRTAPRQT</sequence>
<gene>
    <name evidence="1" type="primary">plsX</name>
    <name type="ordered locus">AnaeK_2843</name>
</gene>
<proteinExistence type="inferred from homology"/>